<evidence type="ECO:0000255" key="1">
    <source>
        <dbReference type="HAMAP-Rule" id="MF_00373"/>
    </source>
</evidence>
<evidence type="ECO:0000256" key="2">
    <source>
        <dbReference type="SAM" id="MobiDB-lite"/>
    </source>
</evidence>
<evidence type="ECO:0000305" key="3"/>
<comment type="similarity">
    <text evidence="1">Belongs to the bacterial ribosomal protein bL28 family.</text>
</comment>
<feature type="chain" id="PRO_1000007358" description="Large ribosomal subunit protein bL28">
    <location>
        <begin position="1"/>
        <end position="96"/>
    </location>
</feature>
<feature type="region of interest" description="Disordered" evidence="2">
    <location>
        <begin position="1"/>
        <end position="22"/>
    </location>
</feature>
<accession>Q1GIW2</accession>
<name>RL28_RUEST</name>
<organism>
    <name type="scientific">Ruegeria sp. (strain TM1040)</name>
    <name type="common">Silicibacter sp.</name>
    <dbReference type="NCBI Taxonomy" id="292414"/>
    <lineage>
        <taxon>Bacteria</taxon>
        <taxon>Pseudomonadati</taxon>
        <taxon>Pseudomonadota</taxon>
        <taxon>Alphaproteobacteria</taxon>
        <taxon>Rhodobacterales</taxon>
        <taxon>Roseobacteraceae</taxon>
        <taxon>Ruegeria</taxon>
    </lineage>
</organism>
<protein>
    <recommendedName>
        <fullName evidence="1">Large ribosomal subunit protein bL28</fullName>
    </recommendedName>
    <alternativeName>
        <fullName evidence="3">50S ribosomal protein L28</fullName>
    </alternativeName>
</protein>
<gene>
    <name evidence="1" type="primary">rpmB</name>
    <name type="ordered locus">TM1040_0671</name>
</gene>
<proteinExistence type="inferred from homology"/>
<keyword id="KW-1185">Reference proteome</keyword>
<keyword id="KW-0687">Ribonucleoprotein</keyword>
<keyword id="KW-0689">Ribosomal protein</keyword>
<dbReference type="EMBL" id="CP000377">
    <property type="protein sequence ID" value="ABF63404.1"/>
    <property type="molecule type" value="Genomic_DNA"/>
</dbReference>
<dbReference type="RefSeq" id="WP_011538016.1">
    <property type="nucleotide sequence ID" value="NC_008044.1"/>
</dbReference>
<dbReference type="SMR" id="Q1GIW2"/>
<dbReference type="STRING" id="292414.TM1040_0671"/>
<dbReference type="KEGG" id="sit:TM1040_0671"/>
<dbReference type="eggNOG" id="COG0227">
    <property type="taxonomic scope" value="Bacteria"/>
</dbReference>
<dbReference type="HOGENOM" id="CLU_064548_4_2_5"/>
<dbReference type="OrthoDB" id="9805609at2"/>
<dbReference type="Proteomes" id="UP000000636">
    <property type="component" value="Chromosome"/>
</dbReference>
<dbReference type="GO" id="GO:0022625">
    <property type="term" value="C:cytosolic large ribosomal subunit"/>
    <property type="evidence" value="ECO:0007669"/>
    <property type="project" value="TreeGrafter"/>
</dbReference>
<dbReference type="GO" id="GO:0003735">
    <property type="term" value="F:structural constituent of ribosome"/>
    <property type="evidence" value="ECO:0007669"/>
    <property type="project" value="InterPro"/>
</dbReference>
<dbReference type="GO" id="GO:0006412">
    <property type="term" value="P:translation"/>
    <property type="evidence" value="ECO:0007669"/>
    <property type="project" value="UniProtKB-UniRule"/>
</dbReference>
<dbReference type="Gene3D" id="2.30.170.40">
    <property type="entry name" value="Ribosomal protein L28/L24"/>
    <property type="match status" value="1"/>
</dbReference>
<dbReference type="HAMAP" id="MF_00373">
    <property type="entry name" value="Ribosomal_bL28"/>
    <property type="match status" value="1"/>
</dbReference>
<dbReference type="InterPro" id="IPR026569">
    <property type="entry name" value="Ribosomal_bL28"/>
</dbReference>
<dbReference type="InterPro" id="IPR034704">
    <property type="entry name" value="Ribosomal_bL28/bL31-like_sf"/>
</dbReference>
<dbReference type="InterPro" id="IPR001383">
    <property type="entry name" value="Ribosomal_bL28_bact-type"/>
</dbReference>
<dbReference type="InterPro" id="IPR037147">
    <property type="entry name" value="Ribosomal_bL28_sf"/>
</dbReference>
<dbReference type="NCBIfam" id="TIGR00009">
    <property type="entry name" value="L28"/>
    <property type="match status" value="1"/>
</dbReference>
<dbReference type="PANTHER" id="PTHR13528">
    <property type="entry name" value="39S RIBOSOMAL PROTEIN L28, MITOCHONDRIAL"/>
    <property type="match status" value="1"/>
</dbReference>
<dbReference type="PANTHER" id="PTHR13528:SF2">
    <property type="entry name" value="LARGE RIBOSOMAL SUBUNIT PROTEIN BL28M"/>
    <property type="match status" value="1"/>
</dbReference>
<dbReference type="Pfam" id="PF00830">
    <property type="entry name" value="Ribosomal_L28"/>
    <property type="match status" value="1"/>
</dbReference>
<dbReference type="SUPFAM" id="SSF143800">
    <property type="entry name" value="L28p-like"/>
    <property type="match status" value="1"/>
</dbReference>
<sequence>MSRRCELTGKGPMTGNNVSHANNKTKRRFLPNLNDVTLQSETLGRGVKLRISAAALRSVDHRGGLDAFLAKAKDEELSAAALKVKKEIAKAQAAEA</sequence>
<reference key="1">
    <citation type="submission" date="2006-05" db="EMBL/GenBank/DDBJ databases">
        <title>Complete sequence of chromosome of Silicibacter sp. TM1040.</title>
        <authorList>
            <consortium name="US DOE Joint Genome Institute"/>
            <person name="Copeland A."/>
            <person name="Lucas S."/>
            <person name="Lapidus A."/>
            <person name="Barry K."/>
            <person name="Detter J.C."/>
            <person name="Glavina del Rio T."/>
            <person name="Hammon N."/>
            <person name="Israni S."/>
            <person name="Dalin E."/>
            <person name="Tice H."/>
            <person name="Pitluck S."/>
            <person name="Brettin T."/>
            <person name="Bruce D."/>
            <person name="Han C."/>
            <person name="Tapia R."/>
            <person name="Goodwin L."/>
            <person name="Thompson L.S."/>
            <person name="Gilna P."/>
            <person name="Schmutz J."/>
            <person name="Larimer F."/>
            <person name="Land M."/>
            <person name="Hauser L."/>
            <person name="Kyrpides N."/>
            <person name="Kim E."/>
            <person name="Belas R."/>
            <person name="Moran M.A."/>
            <person name="Buchan A."/>
            <person name="Gonzalez J.M."/>
            <person name="Schell M.A."/>
            <person name="Sun F."/>
            <person name="Richardson P."/>
        </authorList>
    </citation>
    <scope>NUCLEOTIDE SEQUENCE [LARGE SCALE GENOMIC DNA]</scope>
    <source>
        <strain>TM1040</strain>
    </source>
</reference>